<organismHost>
    <name type="scientific">Escherichia coli</name>
    <dbReference type="NCBI Taxonomy" id="562"/>
</organismHost>
<protein>
    <recommendedName>
        <fullName>Uncharacterized protein Gp1</fullName>
    </recommendedName>
    <alternativeName>
        <fullName>12 kDa protein in genome left end</fullName>
    </alternativeName>
    <alternativeName>
        <fullName>ORF 1</fullName>
    </alternativeName>
</protein>
<accession>P15234</accession>
<accession>A0MZ93</accession>
<reference key="1">
    <citation type="journal article" date="1988" name="J. Mol. Biol.">
        <title>Structure of the ends of the coliphage N4 genome.</title>
        <authorList>
            <person name="Ohmori H."/>
            <person name="Haynes L.L."/>
            <person name="Rothman-Denes L.B."/>
        </authorList>
    </citation>
    <scope>NUCLEOTIDE SEQUENCE [GENOMIC DNA]</scope>
</reference>
<reference key="2">
    <citation type="submission" date="2006-11" db="EMBL/GenBank/DDBJ databases">
        <title>Genome sequence and analysis of bacteriophage N4.</title>
        <authorList>
            <person name="Hendrix R.W."/>
            <person name="Rothman-Denes L."/>
            <person name="Hatfull G.F."/>
            <person name="Lawrence J.G."/>
            <person name="Pedulla M."/>
        </authorList>
    </citation>
    <scope>NUCLEOTIDE SEQUENCE [GENOMIC DNA]</scope>
</reference>
<dbReference type="EMBL" id="EF056009">
    <property type="protein sequence ID" value="ABK54372.1"/>
    <property type="molecule type" value="Genomic_DNA"/>
</dbReference>
<dbReference type="PIR" id="S01368">
    <property type="entry name" value="S01368"/>
</dbReference>
<dbReference type="RefSeq" id="YP_950479.1">
    <property type="nucleotide sequence ID" value="NC_008720.1"/>
</dbReference>
<dbReference type="SMR" id="P15234"/>
<dbReference type="GeneID" id="5075708"/>
<dbReference type="KEGG" id="vg:5075708"/>
<dbReference type="Proteomes" id="UP000001789">
    <property type="component" value="Genome"/>
</dbReference>
<keyword id="KW-1185">Reference proteome</keyword>
<sequence length="108" mass="12190">MTTQANVRMTVGTLLGTVNEAATTVADTFGTATKAVGMLNRYVTKQADKQIIRDKLEMHEFTNKLIEETAMQEAIRQKQILDFCKDEQNKELFSNAYDRLSKILADSK</sequence>
<feature type="chain" id="PRO_0000106622" description="Uncharacterized protein Gp1">
    <location>
        <begin position="1"/>
        <end position="108"/>
    </location>
</feature>
<name>YLF1_BPN4</name>
<proteinExistence type="predicted"/>
<organism>
    <name type="scientific">Enterobacteria phage N4</name>
    <name type="common">Bacteriophage N4</name>
    <dbReference type="NCBI Taxonomy" id="2886925"/>
    <lineage>
        <taxon>Viruses</taxon>
        <taxon>Duplodnaviria</taxon>
        <taxon>Heunggongvirae</taxon>
        <taxon>Uroviricota</taxon>
        <taxon>Caudoviricetes</taxon>
        <taxon>Schitoviridae</taxon>
        <taxon>Enquatrovirinae</taxon>
        <taxon>Enquatrovirus</taxon>
        <taxon>Enquatrovirus N4</taxon>
    </lineage>
</organism>